<evidence type="ECO:0000255" key="1">
    <source>
        <dbReference type="PROSITE-ProRule" id="PRU00541"/>
    </source>
</evidence>
<evidence type="ECO:0000255" key="2">
    <source>
        <dbReference type="PROSITE-ProRule" id="PRU00542"/>
    </source>
</evidence>
<evidence type="ECO:0000256" key="3">
    <source>
        <dbReference type="SAM" id="MobiDB-lite"/>
    </source>
</evidence>
<evidence type="ECO:0000269" key="4">
    <source>
    </source>
</evidence>
<evidence type="ECO:0000269" key="5">
    <source>
    </source>
</evidence>
<evidence type="ECO:0000269" key="6">
    <source>
    </source>
</evidence>
<evidence type="ECO:0000269" key="7">
    <source>
    </source>
</evidence>
<evidence type="ECO:0000269" key="8">
    <source>
    </source>
</evidence>
<evidence type="ECO:0000269" key="9">
    <source>
    </source>
</evidence>
<evidence type="ECO:0000303" key="10">
    <source>
    </source>
</evidence>
<evidence type="ECO:0000305" key="11"/>
<evidence type="ECO:0000305" key="12">
    <source>
    </source>
</evidence>
<evidence type="ECO:0000312" key="13">
    <source>
        <dbReference type="Araport" id="AT1G35530"/>
    </source>
</evidence>
<evidence type="ECO:0000312" key="14">
    <source>
        <dbReference type="EMBL" id="AAF79368.1"/>
    </source>
</evidence>
<gene>
    <name evidence="10" type="primary">FANCM</name>
    <name evidence="13" type="ordered locus">At1g35530</name>
    <name evidence="14" type="ORF">F15O4.40</name>
</gene>
<feature type="chain" id="PRO_0000440040" description="DEAD-box ATP-dependent RNA helicase FANCM">
    <location>
        <begin position="1"/>
        <end position="1344"/>
    </location>
</feature>
<feature type="domain" description="Helicase ATP-binding" evidence="1">
    <location>
        <begin position="124"/>
        <end position="292"/>
    </location>
</feature>
<feature type="domain" description="Helicase C-terminal" evidence="2">
    <location>
        <begin position="450"/>
        <end position="621"/>
    </location>
</feature>
<feature type="region of interest" description="Disordered" evidence="3">
    <location>
        <begin position="39"/>
        <end position="61"/>
    </location>
</feature>
<feature type="region of interest" description="Disordered" evidence="3">
    <location>
        <begin position="765"/>
        <end position="790"/>
    </location>
</feature>
<feature type="region of interest" description="Disordered" evidence="3">
    <location>
        <begin position="1110"/>
        <end position="1148"/>
    </location>
</feature>
<feature type="region of interest" description="Disordered" evidence="3">
    <location>
        <begin position="1183"/>
        <end position="1218"/>
    </location>
</feature>
<feature type="region of interest" description="Disordered" evidence="3">
    <location>
        <begin position="1307"/>
        <end position="1344"/>
    </location>
</feature>
<feature type="short sequence motif" description="DEAH box" evidence="1">
    <location>
        <begin position="240"/>
        <end position="243"/>
    </location>
</feature>
<feature type="compositionally biased region" description="Acidic residues" evidence="3">
    <location>
        <begin position="1118"/>
        <end position="1135"/>
    </location>
</feature>
<feature type="compositionally biased region" description="Polar residues" evidence="3">
    <location>
        <begin position="1207"/>
        <end position="1218"/>
    </location>
</feature>
<feature type="compositionally biased region" description="Basic and acidic residues" evidence="3">
    <location>
        <begin position="1308"/>
        <end position="1318"/>
    </location>
</feature>
<feature type="binding site" evidence="1">
    <location>
        <begin position="137"/>
        <end position="144"/>
    </location>
    <ligand>
        <name>ATP</name>
        <dbReference type="ChEBI" id="CHEBI:30616"/>
    </ligand>
</feature>
<accession>I3XHK1</accession>
<accession>Q9LQE5</accession>
<comment type="function">
    <text evidence="4 5 6 7 8 9">Involved in ordered homologous recombination (HR) events in somatic and meiotic cells (PubMed:22547783). Involved in the suppression of spontaneous HR events in somatic cells (PubMed:22547783, PubMed:24635147). Has an opposite function to the DNA binding cofactor MHF1 which promotes spontaneous HR. Functions in replicative repair independently of MHF1 and in a parallel pathway to the endonuclease MUS81 (PubMed:24635147). Acts in the same pathway as the two DNA-binding cofactors MHF1 and MHF2 to restrain class II meiotic crossover (CO), and acts exclusively with MHF1 and MHF2 during meiosis to repair DNA interstrand cross-links (ICLs) (PubMed:24635147, PubMed:25038251). This common pathway is in parallel to the pathway that involves the RECQ4A helicase (PubMed:24635147). Seems to be involved in the stabilization of recombination intermediates (PubMed:22723424, PubMed:22860689). Involved in DNA double-strand break (DSB) repair during meiosis. Required for synthesis-dependent strand annealing (SDSA) and to a lesser extent for single-strand annealing (SSA) (PubMed:22860689, PubMed:26161528). May process meiotic DSB repair intermediates, possibly D-loops, driving them toward noncrossover (NCO) resolution (PubMed:22723424, PubMed:26161528).</text>
</comment>
<comment type="catalytic activity">
    <reaction evidence="11">
        <text>ATP + H2O = ADP + phosphate + H(+)</text>
        <dbReference type="Rhea" id="RHEA:13065"/>
        <dbReference type="ChEBI" id="CHEBI:15377"/>
        <dbReference type="ChEBI" id="CHEBI:15378"/>
        <dbReference type="ChEBI" id="CHEBI:30616"/>
        <dbReference type="ChEBI" id="CHEBI:43474"/>
        <dbReference type="ChEBI" id="CHEBI:456216"/>
        <dbReference type="EC" id="3.6.4.13"/>
    </reaction>
</comment>
<comment type="subcellular location">
    <subcellularLocation>
        <location evidence="12">Nucleus</location>
    </subcellularLocation>
</comment>
<comment type="disruption phenotype">
    <text evidence="4">Reduced fertility.</text>
</comment>
<comment type="similarity">
    <text evidence="11">Belongs to the DEAD box helicase family. DEAH subfamily. FANCM sub-subfamily.</text>
</comment>
<comment type="sequence caution" evidence="11">
    <conflict type="erroneous gene model prediction">
        <sequence resource="EMBL-CDS" id="AAF79368"/>
    </conflict>
</comment>
<keyword id="KW-0067">ATP-binding</keyword>
<keyword id="KW-0227">DNA damage</keyword>
<keyword id="KW-0233">DNA recombination</keyword>
<keyword id="KW-0234">DNA repair</keyword>
<keyword id="KW-0238">DNA-binding</keyword>
<keyword id="KW-0347">Helicase</keyword>
<keyword id="KW-0378">Hydrolase</keyword>
<keyword id="KW-0547">Nucleotide-binding</keyword>
<keyword id="KW-0539">Nucleus</keyword>
<keyword id="KW-1185">Reference proteome</keyword>
<organism>
    <name type="scientific">Arabidopsis thaliana</name>
    <name type="common">Mouse-ear cress</name>
    <dbReference type="NCBI Taxonomy" id="3702"/>
    <lineage>
        <taxon>Eukaryota</taxon>
        <taxon>Viridiplantae</taxon>
        <taxon>Streptophyta</taxon>
        <taxon>Embryophyta</taxon>
        <taxon>Tracheophyta</taxon>
        <taxon>Spermatophyta</taxon>
        <taxon>Magnoliopsida</taxon>
        <taxon>eudicotyledons</taxon>
        <taxon>Gunneridae</taxon>
        <taxon>Pentapetalae</taxon>
        <taxon>rosids</taxon>
        <taxon>malvids</taxon>
        <taxon>Brassicales</taxon>
        <taxon>Brassicaceae</taxon>
        <taxon>Camelineae</taxon>
        <taxon>Arabidopsis</taxon>
    </lineage>
</organism>
<name>FANCM_ARATH</name>
<dbReference type="EC" id="3.6.4.13" evidence="11"/>
<dbReference type="EMBL" id="JQ278026">
    <property type="protein sequence ID" value="AFL55357.1"/>
    <property type="molecule type" value="mRNA"/>
</dbReference>
<dbReference type="EMBL" id="AC007887">
    <property type="protein sequence ID" value="AAF79368.1"/>
    <property type="status" value="ALT_SEQ"/>
    <property type="molecule type" value="Genomic_DNA"/>
</dbReference>
<dbReference type="EMBL" id="CP002684">
    <property type="protein sequence ID" value="ANM58537.1"/>
    <property type="molecule type" value="Genomic_DNA"/>
</dbReference>
<dbReference type="RefSeq" id="NP_001320963.1">
    <property type="nucleotide sequence ID" value="NM_001333162.1"/>
</dbReference>
<dbReference type="SMR" id="I3XHK1"/>
<dbReference type="FunCoup" id="I3XHK1">
    <property type="interactions" value="47"/>
</dbReference>
<dbReference type="STRING" id="3702.I3XHK1"/>
<dbReference type="GlyGen" id="I3XHK1">
    <property type="glycosylation" value="1 site"/>
</dbReference>
<dbReference type="PaxDb" id="3702-AT1G35530.2"/>
<dbReference type="ProteomicsDB" id="230828"/>
<dbReference type="EnsemblPlants" id="AT1G35530.3">
    <property type="protein sequence ID" value="AT1G35530.3"/>
    <property type="gene ID" value="AT1G35530"/>
</dbReference>
<dbReference type="GeneID" id="840448"/>
<dbReference type="Gramene" id="AT1G35530.3">
    <property type="protein sequence ID" value="AT1G35530.3"/>
    <property type="gene ID" value="AT1G35530"/>
</dbReference>
<dbReference type="KEGG" id="ath:AT1G35530"/>
<dbReference type="Araport" id="AT1G35530"/>
<dbReference type="TAIR" id="AT1G35530">
    <property type="gene designation" value="FANCM"/>
</dbReference>
<dbReference type="eggNOG" id="KOG0354">
    <property type="taxonomic scope" value="Eukaryota"/>
</dbReference>
<dbReference type="InParanoid" id="I3XHK1"/>
<dbReference type="PRO" id="PR:I3XHK1"/>
<dbReference type="Proteomes" id="UP000006548">
    <property type="component" value="Chromosome 1"/>
</dbReference>
<dbReference type="ExpressionAtlas" id="I3XHK1">
    <property type="expression patterns" value="baseline and differential"/>
</dbReference>
<dbReference type="GO" id="GO:0005634">
    <property type="term" value="C:nucleus"/>
    <property type="evidence" value="ECO:0007669"/>
    <property type="project" value="UniProtKB-SubCell"/>
</dbReference>
<dbReference type="GO" id="GO:0043138">
    <property type="term" value="F:3'-5' DNA helicase activity"/>
    <property type="evidence" value="ECO:0007669"/>
    <property type="project" value="InterPro"/>
</dbReference>
<dbReference type="GO" id="GO:0005524">
    <property type="term" value="F:ATP binding"/>
    <property type="evidence" value="ECO:0007669"/>
    <property type="project" value="UniProtKB-KW"/>
</dbReference>
<dbReference type="GO" id="GO:0016887">
    <property type="term" value="F:ATP hydrolysis activity"/>
    <property type="evidence" value="ECO:0007669"/>
    <property type="project" value="RHEA"/>
</dbReference>
<dbReference type="GO" id="GO:0003677">
    <property type="term" value="F:DNA binding"/>
    <property type="evidence" value="ECO:0007669"/>
    <property type="project" value="UniProtKB-KW"/>
</dbReference>
<dbReference type="GO" id="GO:0003724">
    <property type="term" value="F:RNA helicase activity"/>
    <property type="evidence" value="ECO:0007669"/>
    <property type="project" value="UniProtKB-EC"/>
</dbReference>
<dbReference type="GO" id="GO:0006310">
    <property type="term" value="P:DNA recombination"/>
    <property type="evidence" value="ECO:0007669"/>
    <property type="project" value="UniProtKB-KW"/>
</dbReference>
<dbReference type="GO" id="GO:0006281">
    <property type="term" value="P:DNA repair"/>
    <property type="evidence" value="ECO:0007669"/>
    <property type="project" value="UniProtKB-KW"/>
</dbReference>
<dbReference type="CDD" id="cd18033">
    <property type="entry name" value="DEXDc_FANCM"/>
    <property type="match status" value="1"/>
</dbReference>
<dbReference type="CDD" id="cd12091">
    <property type="entry name" value="FANCM_ID"/>
    <property type="match status" value="1"/>
</dbReference>
<dbReference type="CDD" id="cd18801">
    <property type="entry name" value="SF2_C_FANCM_Hef"/>
    <property type="match status" value="1"/>
</dbReference>
<dbReference type="FunFam" id="3.40.50.300:FF:001992">
    <property type="entry name" value="ATP-dependent RNA helicase, putative"/>
    <property type="match status" value="1"/>
</dbReference>
<dbReference type="FunFam" id="3.40.50.300:FF:000861">
    <property type="entry name" value="Fanconi anemia, complementation group M"/>
    <property type="match status" value="1"/>
</dbReference>
<dbReference type="Gene3D" id="1.20.1320.20">
    <property type="entry name" value="hef helicase domain"/>
    <property type="match status" value="1"/>
</dbReference>
<dbReference type="Gene3D" id="3.40.50.300">
    <property type="entry name" value="P-loop containing nucleotide triphosphate hydrolases"/>
    <property type="match status" value="2"/>
</dbReference>
<dbReference type="InterPro" id="IPR011545">
    <property type="entry name" value="DEAD/DEAH_box_helicase_dom"/>
</dbReference>
<dbReference type="InterPro" id="IPR039686">
    <property type="entry name" value="FANCM/Mph1-like_ID"/>
</dbReference>
<dbReference type="InterPro" id="IPR044749">
    <property type="entry name" value="FANCM_DEXDc"/>
</dbReference>
<dbReference type="InterPro" id="IPR014001">
    <property type="entry name" value="Helicase_ATP-bd"/>
</dbReference>
<dbReference type="InterPro" id="IPR001650">
    <property type="entry name" value="Helicase_C-like"/>
</dbReference>
<dbReference type="InterPro" id="IPR027417">
    <property type="entry name" value="P-loop_NTPase"/>
</dbReference>
<dbReference type="PANTHER" id="PTHR14025">
    <property type="entry name" value="FANCONI ANEMIA GROUP M FANCM FAMILY MEMBER"/>
    <property type="match status" value="1"/>
</dbReference>
<dbReference type="PANTHER" id="PTHR14025:SF20">
    <property type="entry name" value="FANCONI ANEMIA GROUP M PROTEIN"/>
    <property type="match status" value="1"/>
</dbReference>
<dbReference type="Pfam" id="PF00270">
    <property type="entry name" value="DEAD"/>
    <property type="match status" value="1"/>
</dbReference>
<dbReference type="Pfam" id="PF00271">
    <property type="entry name" value="Helicase_C"/>
    <property type="match status" value="1"/>
</dbReference>
<dbReference type="SMART" id="SM00487">
    <property type="entry name" value="DEXDc"/>
    <property type="match status" value="1"/>
</dbReference>
<dbReference type="SMART" id="SM00490">
    <property type="entry name" value="HELICc"/>
    <property type="match status" value="1"/>
</dbReference>
<dbReference type="SUPFAM" id="SSF52540">
    <property type="entry name" value="P-loop containing nucleoside triphosphate hydrolases"/>
    <property type="match status" value="1"/>
</dbReference>
<dbReference type="PROSITE" id="PS51192">
    <property type="entry name" value="HELICASE_ATP_BIND_1"/>
    <property type="match status" value="1"/>
</dbReference>
<dbReference type="PROSITE" id="PS51194">
    <property type="entry name" value="HELICASE_CTER"/>
    <property type="match status" value="1"/>
</dbReference>
<proteinExistence type="evidence at transcript level"/>
<sequence>MGSRVPIETIEEDGEFDWEAAVKEIDLACLKTTNASSSSSSHFTPLANPPITANLTKPPAKRQSTLDKFIGRTEHKPENHQVVSECGVNDNDNSPLVGIDPEAAKTWIYPVNGSVPLRDYQFAITKTALFSNTLVALPTGLGKTLIAAVVMYNYFRWFPQGKIVFAAPSRPLVMQQIEACHNIVGIPQEWTIDLTGQTCPSKRAFLWKSKRVFFVTPQVLEKDIQSGTCLTNYLVCLVIDEAHRALGNYSYCVVVRELMAVPIQLRILALTATPGSKTQAIQGIIDNLQISTLEYRNESDHDVCPYVHDRKLEVIEVPLGQDADDVSKRLFHVIRPYAVRLKNFGVNLNRDIQTLSPHEVLMARDKFRQAPLPGLPHVNHGDVESCFAALITLYHIRKLLSSHGIRPAYEMLEEKLKEGPFARLMSKNEDIRMTKLLMQQRLSHGAPSPKLSKMLEILVDHFKVKDPKTSRVIIFSNFRGSVRDIMNALSNIGDMVKATEFIGQSSGKTLKGQSQKIQQAVLEKFRAGGFNVIVATSIGEEGLDIMEVDLVICFDANVSPLRMIQRMGRTGRKNNGRVVVLACEGSEKNSYMRKQASGRAIKKHMRNGGTNSFNFHPSPRMIPHVYKPEVQHVEFSIKQFVPRGKKLQEEYATETPAFQKKLTPAETHMLAKYYNNPDEEKLRVSLIAFPHFQTLPSKVHKVMHSRQTGMLIDAMQHLQEPTFSEQSKSFFTEFRAPLGEREELDTGLRVTNDPKDLHSVRDLEVNTSQRKAKQVESPTSTLETTEKDYEESSPTHRYLFSSECASVDTLGNVFVMPVPLLFFPNVLESDNTPLPKTEKQHSCRNTSHIDLVPVDTSEKHRQDNISCKLKERFSPDGASETLETHSLVKRNSTRVGEDDVANSVGEIVLSSDEDDCEGLELSPRLTNFIKSGIVPESPVYDQGEANREEDLEFPQLSSPMRFSNELAGESSFPERKVQHKCNDYNIVSTTTELRTPQKEVGLANGTECLAVSPIPEDWRTPLANLTNTNSSARKDWRVSSGEKLETLRQPRKLKRLRRLGDCSSAVKENYPGITEADHIRSRSRGKKHIRGKKKMIMDDDVQVFIDEEAEVSSGAEMSADENEDVTGDSFEDSFIDDGTMPTANTQAESGKVDMMAVYRRSLLSQSPLPARFRDLAASSLSPYSAGPLTRINESRSDSDKSLSSLRTPKTTNSESNQDAMMIGNLSVVQISSDSRKRKFSLCNSANAPVINLESKFAAHAQATEKESHEGVRSNAGALEYNDDDDDAFFATLDFDAMEAQATLLLSKQRSEAKEKEDATVIPNPGMQRSDGMEKDAPSFDLGLW</sequence>
<protein>
    <recommendedName>
        <fullName evidence="11">DEAD-box ATP-dependent RNA helicase FANCM</fullName>
        <ecNumber evidence="11">3.6.4.13</ecNumber>
    </recommendedName>
    <alternativeName>
        <fullName evidence="11">Fanconia anemia complementation group M-like protein</fullName>
    </alternativeName>
</protein>
<reference key="1">
    <citation type="journal article" date="2012" name="Plant Cell">
        <title>The Fanconi anemia ortholog FANCM ensures ordered homologous recombination in both somatic and meiotic cells in Arabidopsis.</title>
        <authorList>
            <person name="Knoll A."/>
            <person name="Higgins J.D."/>
            <person name="Seeliger K."/>
            <person name="Reha S.J."/>
            <person name="Dangel N.J."/>
            <person name="Bauknecht M."/>
            <person name="Schropfer S."/>
            <person name="Franklin F.C."/>
            <person name="Puchta H."/>
        </authorList>
    </citation>
    <scope>NUCLEOTIDE SEQUENCE [MRNA]</scope>
    <scope>FUNCTION</scope>
    <scope>DISRUPTION PHENOTYPE</scope>
</reference>
<reference key="2">
    <citation type="journal article" date="2000" name="Nature">
        <title>Sequence and analysis of chromosome 1 of the plant Arabidopsis thaliana.</title>
        <authorList>
            <person name="Theologis A."/>
            <person name="Ecker J.R."/>
            <person name="Palm C.J."/>
            <person name="Federspiel N.A."/>
            <person name="Kaul S."/>
            <person name="White O."/>
            <person name="Alonso J."/>
            <person name="Altafi H."/>
            <person name="Araujo R."/>
            <person name="Bowman C.L."/>
            <person name="Brooks S.Y."/>
            <person name="Buehler E."/>
            <person name="Chan A."/>
            <person name="Chao Q."/>
            <person name="Chen H."/>
            <person name="Cheuk R.F."/>
            <person name="Chin C.W."/>
            <person name="Chung M.K."/>
            <person name="Conn L."/>
            <person name="Conway A.B."/>
            <person name="Conway A.R."/>
            <person name="Creasy T.H."/>
            <person name="Dewar K."/>
            <person name="Dunn P."/>
            <person name="Etgu P."/>
            <person name="Feldblyum T.V."/>
            <person name="Feng J.-D."/>
            <person name="Fong B."/>
            <person name="Fujii C.Y."/>
            <person name="Gill J.E."/>
            <person name="Goldsmith A.D."/>
            <person name="Haas B."/>
            <person name="Hansen N.F."/>
            <person name="Hughes B."/>
            <person name="Huizar L."/>
            <person name="Hunter J.L."/>
            <person name="Jenkins J."/>
            <person name="Johnson-Hopson C."/>
            <person name="Khan S."/>
            <person name="Khaykin E."/>
            <person name="Kim C.J."/>
            <person name="Koo H.L."/>
            <person name="Kremenetskaia I."/>
            <person name="Kurtz D.B."/>
            <person name="Kwan A."/>
            <person name="Lam B."/>
            <person name="Langin-Hooper S."/>
            <person name="Lee A."/>
            <person name="Lee J.M."/>
            <person name="Lenz C.A."/>
            <person name="Li J.H."/>
            <person name="Li Y.-P."/>
            <person name="Lin X."/>
            <person name="Liu S.X."/>
            <person name="Liu Z.A."/>
            <person name="Luros J.S."/>
            <person name="Maiti R."/>
            <person name="Marziali A."/>
            <person name="Militscher J."/>
            <person name="Miranda M."/>
            <person name="Nguyen M."/>
            <person name="Nierman W.C."/>
            <person name="Osborne B.I."/>
            <person name="Pai G."/>
            <person name="Peterson J."/>
            <person name="Pham P.K."/>
            <person name="Rizzo M."/>
            <person name="Rooney T."/>
            <person name="Rowley D."/>
            <person name="Sakano H."/>
            <person name="Salzberg S.L."/>
            <person name="Schwartz J.R."/>
            <person name="Shinn P."/>
            <person name="Southwick A.M."/>
            <person name="Sun H."/>
            <person name="Tallon L.J."/>
            <person name="Tambunga G."/>
            <person name="Toriumi M.J."/>
            <person name="Town C.D."/>
            <person name="Utterback T."/>
            <person name="Van Aken S."/>
            <person name="Vaysberg M."/>
            <person name="Vysotskaia V.S."/>
            <person name="Walker M."/>
            <person name="Wu D."/>
            <person name="Yu G."/>
            <person name="Fraser C.M."/>
            <person name="Venter J.C."/>
            <person name="Davis R.W."/>
        </authorList>
    </citation>
    <scope>NUCLEOTIDE SEQUENCE [LARGE SCALE GENOMIC DNA]</scope>
    <source>
        <strain>cv. Columbia</strain>
    </source>
</reference>
<reference key="3">
    <citation type="journal article" date="2017" name="Plant J.">
        <title>Araport11: a complete reannotation of the Arabidopsis thaliana reference genome.</title>
        <authorList>
            <person name="Cheng C.Y."/>
            <person name="Krishnakumar V."/>
            <person name="Chan A.P."/>
            <person name="Thibaud-Nissen F."/>
            <person name="Schobel S."/>
            <person name="Town C.D."/>
        </authorList>
    </citation>
    <scope>GENOME REANNOTATION</scope>
    <source>
        <strain>cv. Columbia</strain>
    </source>
</reference>
<reference key="4">
    <citation type="journal article" date="2012" name="Plant J.">
        <title>The requirement for recombination factors differs considerably between different pathways of homologous double-strand break repair in somatic plant cells.</title>
        <authorList>
            <person name="Roth N."/>
            <person name="Klimesch J."/>
            <person name="Dukowic-Schulze S."/>
            <person name="Pacher M."/>
            <person name="Mannuss A."/>
            <person name="Puchta H."/>
        </authorList>
    </citation>
    <scope>FUNCTION</scope>
</reference>
<reference key="5">
    <citation type="journal article" date="2012" name="Science">
        <title>FANCM limits meiotic crossovers.</title>
        <authorList>
            <person name="Crismani W."/>
            <person name="Girard C."/>
            <person name="Froger N."/>
            <person name="Pradillo M."/>
            <person name="Santos J.L."/>
            <person name="Chelysheva L."/>
            <person name="Copenhaver G.P."/>
            <person name="Horlow C."/>
            <person name="Mercier R."/>
        </authorList>
    </citation>
    <scope>FUNCTION</scope>
</reference>
<reference key="6">
    <citation type="journal article" date="2014" name="Plant J.">
        <title>MHF1 plays Fanconi anaemia complementation group M protein (FANCM)-dependent and FANCM-independent roles in DNA repair and homologous recombination in plants.</title>
        <authorList>
            <person name="Dangel N.J."/>
            <person name="Knoll A."/>
            <person name="Puchta H."/>
        </authorList>
    </citation>
    <scope>FUNCTION</scope>
</reference>
<reference key="7">
    <citation type="journal article" date="2014" name="Nucleic Acids Res.">
        <title>FANCM-associated proteins MHF1 and MHF2, but not the other Fanconi anemia factors, limit meiotic crossovers.</title>
        <authorList>
            <person name="Girard C."/>
            <person name="Crismani W."/>
            <person name="Froger N."/>
            <person name="Mazel J."/>
            <person name="Lemhemdi A."/>
            <person name="Horlow C."/>
            <person name="Mercier R."/>
        </authorList>
    </citation>
    <scope>FUNCTION</scope>
</reference>
<reference key="8">
    <citation type="journal article" date="2015" name="PLoS Genet.">
        <title>AAA-ATPase FIDGETIN-LIKE 1 and helicase FANCM antagonize meiotic crossovers by distinct mechanisms.</title>
        <authorList>
            <person name="Girard C."/>
            <person name="Chelysheva L."/>
            <person name="Choinard S."/>
            <person name="Froger N."/>
            <person name="Macaisne N."/>
            <person name="Lemhemdi A."/>
            <person name="Lehmemdi A."/>
            <person name="Mazel J."/>
            <person name="Crismani W."/>
            <person name="Mercier R."/>
        </authorList>
    </citation>
    <scope>FUNCTION</scope>
    <scope>SUBCELLULAR LOCATION</scope>
</reference>